<proteinExistence type="evidence at protein level"/>
<organism>
    <name type="scientific">Rattus norvegicus</name>
    <name type="common">Rat</name>
    <dbReference type="NCBI Taxonomy" id="10116"/>
    <lineage>
        <taxon>Eukaryota</taxon>
        <taxon>Metazoa</taxon>
        <taxon>Chordata</taxon>
        <taxon>Craniata</taxon>
        <taxon>Vertebrata</taxon>
        <taxon>Euteleostomi</taxon>
        <taxon>Mammalia</taxon>
        <taxon>Eutheria</taxon>
        <taxon>Euarchontoglires</taxon>
        <taxon>Glires</taxon>
        <taxon>Rodentia</taxon>
        <taxon>Myomorpha</taxon>
        <taxon>Muroidea</taxon>
        <taxon>Muridae</taxon>
        <taxon>Murinae</taxon>
        <taxon>Rattus</taxon>
    </lineage>
</organism>
<protein>
    <recommendedName>
        <fullName evidence="4">Large ribosomal subunit protein eL8</fullName>
    </recommendedName>
    <alternativeName>
        <fullName>60S ribosomal protein L7a</fullName>
    </alternativeName>
</protein>
<accession>P62425</accession>
<accession>P11518</accession>
<gene>
    <name type="primary">Rpl7a</name>
</gene>
<dbReference type="EMBL" id="X15013">
    <property type="protein sequence ID" value="CAA33117.1"/>
    <property type="molecule type" value="mRNA"/>
</dbReference>
<dbReference type="PIR" id="S04712">
    <property type="entry name" value="R5RT7A"/>
</dbReference>
<dbReference type="RefSeq" id="NP_001107863.1">
    <property type="nucleotide sequence ID" value="NM_001114391.1"/>
</dbReference>
<dbReference type="PDB" id="7QGG">
    <property type="method" value="EM"/>
    <property type="resolution" value="2.86 A"/>
    <property type="chains" value="I=1-266"/>
</dbReference>
<dbReference type="PDBsum" id="7QGG"/>
<dbReference type="EMDB" id="EMD-13954"/>
<dbReference type="SMR" id="P62425"/>
<dbReference type="BioGRID" id="255414">
    <property type="interactions" value="5"/>
</dbReference>
<dbReference type="FunCoup" id="P62425">
    <property type="interactions" value="2586"/>
</dbReference>
<dbReference type="IntAct" id="P62425">
    <property type="interactions" value="6"/>
</dbReference>
<dbReference type="MINT" id="P62425"/>
<dbReference type="STRING" id="10116.ENSRNOP00000006754"/>
<dbReference type="GlyGen" id="P62425">
    <property type="glycosylation" value="1 site, 1 O-linked glycan (1 site)"/>
</dbReference>
<dbReference type="iPTMnet" id="P62425"/>
<dbReference type="PhosphoSitePlus" id="P62425"/>
<dbReference type="jPOST" id="P62425"/>
<dbReference type="PaxDb" id="10116-ENSRNOP00000006754"/>
<dbReference type="Ensembl" id="ENSRNOT00000044551.5">
    <property type="protein sequence ID" value="ENSRNOP00000063128.3"/>
    <property type="gene ID" value="ENSRNOG00000070974.1"/>
</dbReference>
<dbReference type="GeneID" id="296596"/>
<dbReference type="KEGG" id="rno:296596"/>
<dbReference type="UCSC" id="RGD:1307586">
    <property type="organism name" value="rat"/>
</dbReference>
<dbReference type="AGR" id="RGD:1307586"/>
<dbReference type="CTD" id="6130"/>
<dbReference type="RGD" id="1307586">
    <property type="gene designation" value="Rpl7a"/>
</dbReference>
<dbReference type="eggNOG" id="KOG3166">
    <property type="taxonomic scope" value="Eukaryota"/>
</dbReference>
<dbReference type="GeneTree" id="ENSGT00940000153294"/>
<dbReference type="InParanoid" id="P62425"/>
<dbReference type="OrthoDB" id="29563at2759"/>
<dbReference type="PhylomeDB" id="P62425"/>
<dbReference type="Reactome" id="R-RNO-156827">
    <property type="pathway name" value="L13a-mediated translational silencing of Ceruloplasmin expression"/>
</dbReference>
<dbReference type="Reactome" id="R-RNO-1799339">
    <property type="pathway name" value="SRP-dependent cotranslational protein targeting to membrane"/>
</dbReference>
<dbReference type="Reactome" id="R-RNO-6791226">
    <property type="pathway name" value="Major pathway of rRNA processing in the nucleolus and cytosol"/>
</dbReference>
<dbReference type="Reactome" id="R-RNO-72689">
    <property type="pathway name" value="Formation of a pool of free 40S subunits"/>
</dbReference>
<dbReference type="Reactome" id="R-RNO-72706">
    <property type="pathway name" value="GTP hydrolysis and joining of the 60S ribosomal subunit"/>
</dbReference>
<dbReference type="Reactome" id="R-RNO-975956">
    <property type="pathway name" value="Nonsense Mediated Decay (NMD) independent of the Exon Junction Complex (EJC)"/>
</dbReference>
<dbReference type="Reactome" id="R-RNO-975957">
    <property type="pathway name" value="Nonsense Mediated Decay (NMD) enhanced by the Exon Junction Complex (EJC)"/>
</dbReference>
<dbReference type="PRO" id="PR:P62425"/>
<dbReference type="Proteomes" id="UP000002494">
    <property type="component" value="Chromosome 3"/>
</dbReference>
<dbReference type="GO" id="GO:0005737">
    <property type="term" value="C:cytoplasm"/>
    <property type="evidence" value="ECO:0000266"/>
    <property type="project" value="RGD"/>
</dbReference>
<dbReference type="GO" id="GO:0022625">
    <property type="term" value="C:cytosolic large ribosomal subunit"/>
    <property type="evidence" value="ECO:0000314"/>
    <property type="project" value="RGD"/>
</dbReference>
<dbReference type="GO" id="GO:0022626">
    <property type="term" value="C:cytosolic ribosome"/>
    <property type="evidence" value="ECO:0000266"/>
    <property type="project" value="RGD"/>
</dbReference>
<dbReference type="GO" id="GO:0016020">
    <property type="term" value="C:membrane"/>
    <property type="evidence" value="ECO:0000266"/>
    <property type="project" value="RGD"/>
</dbReference>
<dbReference type="GO" id="GO:0005730">
    <property type="term" value="C:nucleolus"/>
    <property type="evidence" value="ECO:0000266"/>
    <property type="project" value="RGD"/>
</dbReference>
<dbReference type="GO" id="GO:0005840">
    <property type="term" value="C:ribosome"/>
    <property type="evidence" value="ECO:0000314"/>
    <property type="project" value="RGD"/>
</dbReference>
<dbReference type="GO" id="GO:0045202">
    <property type="term" value="C:synapse"/>
    <property type="evidence" value="ECO:0000266"/>
    <property type="project" value="RGD"/>
</dbReference>
<dbReference type="GO" id="GO:0003723">
    <property type="term" value="F:RNA binding"/>
    <property type="evidence" value="ECO:0000318"/>
    <property type="project" value="GO_Central"/>
</dbReference>
<dbReference type="GO" id="GO:0003735">
    <property type="term" value="F:structural constituent of ribosome"/>
    <property type="evidence" value="ECO:0000266"/>
    <property type="project" value="RGD"/>
</dbReference>
<dbReference type="GO" id="GO:1904401">
    <property type="term" value="P:cellular response to Thyroid stimulating hormone"/>
    <property type="evidence" value="ECO:0000270"/>
    <property type="project" value="RGD"/>
</dbReference>
<dbReference type="GO" id="GO:0000470">
    <property type="term" value="P:maturation of LSU-rRNA"/>
    <property type="evidence" value="ECO:0000318"/>
    <property type="project" value="GO_Central"/>
</dbReference>
<dbReference type="FunFam" id="3.30.1330.30:FF:000003">
    <property type="entry name" value="60S ribosomal protein L7a"/>
    <property type="match status" value="1"/>
</dbReference>
<dbReference type="Gene3D" id="3.30.1330.30">
    <property type="match status" value="1"/>
</dbReference>
<dbReference type="InterPro" id="IPR050257">
    <property type="entry name" value="eL8/uL1-like"/>
</dbReference>
<dbReference type="InterPro" id="IPR029064">
    <property type="entry name" value="Ribosomal_eL30-like_sf"/>
</dbReference>
<dbReference type="InterPro" id="IPR004037">
    <property type="entry name" value="Ribosomal_eL8-like_CS"/>
</dbReference>
<dbReference type="InterPro" id="IPR004038">
    <property type="entry name" value="Ribosomal_eL8/eL30/eS12/Gad45"/>
</dbReference>
<dbReference type="InterPro" id="IPR018492">
    <property type="entry name" value="Ribosomal_eL8/Nhp2"/>
</dbReference>
<dbReference type="InterPro" id="IPR001921">
    <property type="entry name" value="Ribosomal_eL8_euk"/>
</dbReference>
<dbReference type="PANTHER" id="PTHR23105">
    <property type="entry name" value="RIBOSOMAL PROTEIN L7AE FAMILY MEMBER"/>
    <property type="match status" value="1"/>
</dbReference>
<dbReference type="Pfam" id="PF01248">
    <property type="entry name" value="Ribosomal_L7Ae"/>
    <property type="match status" value="1"/>
</dbReference>
<dbReference type="PRINTS" id="PR00881">
    <property type="entry name" value="L7ARS6FAMILY"/>
</dbReference>
<dbReference type="PRINTS" id="PR00882">
    <property type="entry name" value="RIBOSOMALL7A"/>
</dbReference>
<dbReference type="SUPFAM" id="SSF55315">
    <property type="entry name" value="L30e-like"/>
    <property type="match status" value="1"/>
</dbReference>
<dbReference type="PROSITE" id="PS01082">
    <property type="entry name" value="RIBOSOMAL_L7AE"/>
    <property type="match status" value="1"/>
</dbReference>
<name>RL7A_RAT</name>
<comment type="function">
    <text evidence="2">Component of the large ribosomal subunit. The ribosome is a large ribonucleoprotein complex responsible for the synthesis of proteins in the cell.</text>
</comment>
<comment type="subunit">
    <text evidence="1 2">Component of the large ribosomal subunit (By similarity). Interacts with CRY1 (By similarity). Interacts with DICER1, AGO2, TARBP2, MOV10 and EIF6; they form a large RNA-induced silencing complex (RISC) (By similarity).</text>
</comment>
<comment type="subcellular location">
    <subcellularLocation>
        <location evidence="2">Cytoplasm</location>
    </subcellularLocation>
</comment>
<comment type="similarity">
    <text evidence="4">Belongs to the eukaryotic ribosomal protein eL8 family.</text>
</comment>
<reference key="1">
    <citation type="journal article" date="1989" name="Nucleic Acids Res.">
        <title>Nucleotide sequence of cloned cDNA specific for rat ribosomal protein L7a.</title>
        <authorList>
            <person name="Nakamura H."/>
            <person name="Tanaka T."/>
            <person name="Ishikawa K."/>
        </authorList>
    </citation>
    <scope>NUCLEOTIDE SEQUENCE [MRNA]</scope>
    <source>
        <tissue>Liver</tissue>
    </source>
</reference>
<reference key="2">
    <citation type="journal article" date="1979" name="J. Supramol. Struct.">
        <title>Sequence of the amino-terminal region of rat liver ribosomal proteins S4, S6, S8, L6, L7a, L18, L27, L30, L37, L37a, and L39.</title>
        <authorList>
            <person name="Wittmann-Liebold B."/>
            <person name="Geissler A.W."/>
            <person name="Lin A."/>
            <person name="Wool I.G."/>
        </authorList>
    </citation>
    <scope>PROTEIN SEQUENCE OF 2-40</scope>
</reference>
<sequence length="266" mass="29996">MPKGKKAKGKKVAPAPAVVKKQEAKKVVNPLFEKRPKNFGIGQDIQPKRDLTRFVKWPRYIRLQRQRAILYKRLKVPPAINQFTQALDRQTATQLLKLAHKYRPETKQEKKQRLLARAEKKAAGKGDVPTKRPPVLRAGVNTVTTLVENKKAQLVVIAHDVDPIELVVFLPALCRKMGVPYCIIKGKARLGRLVHRKTCTTVAFTQVNSEDKGALAKLVEAIRTNYNDRYDEIRRHWGGNVLGPKSVARIAKLEKAKAKELATKLG</sequence>
<evidence type="ECO:0000250" key="1">
    <source>
        <dbReference type="UniProtKB" id="P12970"/>
    </source>
</evidence>
<evidence type="ECO:0000250" key="2">
    <source>
        <dbReference type="UniProtKB" id="P62424"/>
    </source>
</evidence>
<evidence type="ECO:0000269" key="3">
    <source>
    </source>
</evidence>
<evidence type="ECO:0000305" key="4"/>
<keyword id="KW-0002">3D-structure</keyword>
<keyword id="KW-0007">Acetylation</keyword>
<keyword id="KW-0963">Cytoplasm</keyword>
<keyword id="KW-0903">Direct protein sequencing</keyword>
<keyword id="KW-1017">Isopeptide bond</keyword>
<keyword id="KW-1185">Reference proteome</keyword>
<keyword id="KW-0687">Ribonucleoprotein</keyword>
<keyword id="KW-0689">Ribosomal protein</keyword>
<keyword id="KW-0832">Ubl conjugation</keyword>
<feature type="initiator methionine" description="Removed" evidence="3">
    <location>
        <position position="1"/>
    </location>
</feature>
<feature type="chain" id="PRO_0000136750" description="Large ribosomal subunit protein eL8">
    <location>
        <begin position="2"/>
        <end position="266"/>
    </location>
</feature>
<feature type="modified residue" description="N6-acetyllysine" evidence="2">
    <location>
        <position position="34"/>
    </location>
</feature>
<feature type="modified residue" description="N6-acetyllysine; alternate" evidence="2">
    <location>
        <position position="97"/>
    </location>
</feature>
<feature type="modified residue" description="N6-acetyllysine" evidence="2">
    <location>
        <position position="217"/>
    </location>
</feature>
<feature type="cross-link" description="Glycyl lysine isopeptide (Lys-Gly) (interchain with G-Cter in SUMO2)" evidence="2">
    <location>
        <position position="11"/>
    </location>
</feature>
<feature type="cross-link" description="Glycyl lysine isopeptide (Lys-Gly) (interchain with G-Cter in SUMO2)" evidence="2">
    <location>
        <position position="20"/>
    </location>
</feature>
<feature type="cross-link" description="Glycyl lysine isopeptide (Lys-Gly) (interchain with G-Cter in SUMO2)" evidence="2">
    <location>
        <position position="21"/>
    </location>
</feature>
<feature type="cross-link" description="Glycyl lysine isopeptide (Lys-Gly) (interchain with G-Cter in SUMO2)" evidence="2">
    <location>
        <position position="48"/>
    </location>
</feature>
<feature type="cross-link" description="Glycyl lysine isopeptide (Lys-Gly) (interchain with G-Cter in SUMO2); alternate" evidence="2">
    <location>
        <position position="97"/>
    </location>
</feature>
<feature type="cross-link" description="Glycyl lysine isopeptide (Lys-Gly) (interchain with G-Cter in SUMO2)" evidence="2">
    <location>
        <position position="125"/>
    </location>
</feature>
<feature type="cross-link" description="Glycyl lysine isopeptide (Lys-Gly) (interchain with G-Cter in SUMO2)" evidence="2">
    <location>
        <position position="245"/>
    </location>
</feature>
<feature type="sequence conflict" description="In Ref. 2; AA sequence." evidence="4" ref="2">
    <original>E</original>
    <variation>Q</variation>
    <location>
        <position position="33"/>
    </location>
</feature>
<feature type="sequence conflict" description="In Ref. 2; AA sequence." evidence="4" ref="2">
    <original>R</original>
    <variation>S</variation>
    <location>
        <position position="35"/>
    </location>
</feature>